<gene>
    <name evidence="1" type="primary">yhaM</name>
    <name type="ordered locus">EcHS_A3298</name>
</gene>
<accession>A8A4S3</accession>
<organism>
    <name type="scientific">Escherichia coli O9:H4 (strain HS)</name>
    <dbReference type="NCBI Taxonomy" id="331112"/>
    <lineage>
        <taxon>Bacteria</taxon>
        <taxon>Pseudomonadati</taxon>
        <taxon>Pseudomonadota</taxon>
        <taxon>Gammaproteobacteria</taxon>
        <taxon>Enterobacterales</taxon>
        <taxon>Enterobacteriaceae</taxon>
        <taxon>Escherichia</taxon>
    </lineage>
</organism>
<evidence type="ECO:0000255" key="1">
    <source>
        <dbReference type="HAMAP-Rule" id="MF_01845"/>
    </source>
</evidence>
<comment type="similarity">
    <text evidence="1">Belongs to the UPF0597 family.</text>
</comment>
<sequence>MFDSTLNPLWQRYILAVQEEVKPALGCTEPISLALAAAVAAAELEGPVERVEAWVSPNLMKNGLGVTVPGTGMVGLPIAAALGALGGNANAGLEVLKDATAQAIADAKALLAAGKVSVKIQEPCNEILFSRAKVWNGEKWACVTIVGGHTNIVHIETHDGVVFTQQACVAEGEQESPLTVLSRTTLAEILKFVNEVPFAAIRFILDSAKLNCALSQEGLSGKWGLHIGATLEKQCARGLLAKDLSSSIVIRTSAASDARMGGATLPAMSNSGSGNQGITATMPVVVVAEHFGADDERLARALMLSHLSAIYIHNQLPRLSALCAATTAAMGAAAGMAWLVDGRYETISMAISSMIGDVSGMICDGASNSCAMKVSTSASAAWKAVLMALDDTAVTGNEGIVAHDVEQSIANLCALASHSMQQTDRQIIEIMASKAR</sequence>
<protein>
    <recommendedName>
        <fullName evidence="1">UPF0597 protein YhaM</fullName>
    </recommendedName>
</protein>
<proteinExistence type="inferred from homology"/>
<reference key="1">
    <citation type="journal article" date="2008" name="J. Bacteriol.">
        <title>The pangenome structure of Escherichia coli: comparative genomic analysis of E. coli commensal and pathogenic isolates.</title>
        <authorList>
            <person name="Rasko D.A."/>
            <person name="Rosovitz M.J."/>
            <person name="Myers G.S.A."/>
            <person name="Mongodin E.F."/>
            <person name="Fricke W.F."/>
            <person name="Gajer P."/>
            <person name="Crabtree J."/>
            <person name="Sebaihia M."/>
            <person name="Thomson N.R."/>
            <person name="Chaudhuri R."/>
            <person name="Henderson I.R."/>
            <person name="Sperandio V."/>
            <person name="Ravel J."/>
        </authorList>
    </citation>
    <scope>NUCLEOTIDE SEQUENCE [LARGE SCALE GENOMIC DNA]</scope>
    <source>
        <strain>HS</strain>
    </source>
</reference>
<dbReference type="EMBL" id="CP000802">
    <property type="protein sequence ID" value="ABV07527.1"/>
    <property type="molecule type" value="Genomic_DNA"/>
</dbReference>
<dbReference type="SMR" id="A8A4S3"/>
<dbReference type="KEGG" id="ecx:EcHS_A3298"/>
<dbReference type="HOGENOM" id="CLU_051840_0_0_6"/>
<dbReference type="GO" id="GO:0080146">
    <property type="term" value="F:L-cysteine desulfhydrase activity"/>
    <property type="evidence" value="ECO:0007669"/>
    <property type="project" value="TreeGrafter"/>
</dbReference>
<dbReference type="GO" id="GO:0019450">
    <property type="term" value="P:L-cysteine catabolic process to pyruvate"/>
    <property type="evidence" value="ECO:0007669"/>
    <property type="project" value="TreeGrafter"/>
</dbReference>
<dbReference type="HAMAP" id="MF_01845">
    <property type="entry name" value="UPF0597"/>
    <property type="match status" value="1"/>
</dbReference>
<dbReference type="InterPro" id="IPR005130">
    <property type="entry name" value="Ser_deHydtase-like_asu"/>
</dbReference>
<dbReference type="InterPro" id="IPR021144">
    <property type="entry name" value="UPF0597"/>
</dbReference>
<dbReference type="PANTHER" id="PTHR30501">
    <property type="entry name" value="UPF0597 PROTEIN YHAM"/>
    <property type="match status" value="1"/>
</dbReference>
<dbReference type="PANTHER" id="PTHR30501:SF2">
    <property type="entry name" value="UPF0597 PROTEIN YHAM"/>
    <property type="match status" value="1"/>
</dbReference>
<dbReference type="Pfam" id="PF03313">
    <property type="entry name" value="SDH_alpha"/>
    <property type="match status" value="1"/>
</dbReference>
<dbReference type="PIRSF" id="PIRSF006054">
    <property type="entry name" value="UCP006054"/>
    <property type="match status" value="1"/>
</dbReference>
<name>YHAM_ECOHS</name>
<feature type="chain" id="PRO_0000339825" description="UPF0597 protein YhaM">
    <location>
        <begin position="1"/>
        <end position="436"/>
    </location>
</feature>